<reference key="1">
    <citation type="submission" date="1999-06" db="EMBL/GenBank/DDBJ databases">
        <title>Structural analysis of Arabidopsis thaliana chromosome 5. XI.</title>
        <authorList>
            <person name="Kaneko T."/>
            <person name="Katoh T."/>
            <person name="Asamizu E."/>
            <person name="Sato S."/>
            <person name="Nakamura Y."/>
            <person name="Kotani H."/>
            <person name="Tabata S."/>
        </authorList>
    </citation>
    <scope>NUCLEOTIDE SEQUENCE [LARGE SCALE GENOMIC DNA]</scope>
    <source>
        <strain>cv. Columbia</strain>
    </source>
</reference>
<reference key="2">
    <citation type="journal article" date="2017" name="Plant J.">
        <title>Araport11: a complete reannotation of the Arabidopsis thaliana reference genome.</title>
        <authorList>
            <person name="Cheng C.Y."/>
            <person name="Krishnakumar V."/>
            <person name="Chan A.P."/>
            <person name="Thibaud-Nissen F."/>
            <person name="Schobel S."/>
            <person name="Town C.D."/>
        </authorList>
    </citation>
    <scope>GENOME REANNOTATION</scope>
    <source>
        <strain>cv. Columbia</strain>
    </source>
</reference>
<reference key="3">
    <citation type="journal article" date="2004" name="Plant Cell">
        <title>Genome-wide analysis of Arabidopsis pentatricopeptide repeat proteins reveals their essential role in organelle biogenesis.</title>
        <authorList>
            <person name="Lurin C."/>
            <person name="Andres C."/>
            <person name="Aubourg S."/>
            <person name="Bellaoui M."/>
            <person name="Bitton F."/>
            <person name="Bruyere C."/>
            <person name="Caboche M."/>
            <person name="Debast C."/>
            <person name="Gualberto J."/>
            <person name="Hoffmann B."/>
            <person name="Lecharny A."/>
            <person name="Le Ret M."/>
            <person name="Martin-Magniette M.-L."/>
            <person name="Mireau H."/>
            <person name="Peeters N."/>
            <person name="Renou J.-P."/>
            <person name="Szurek B."/>
            <person name="Taconnat L."/>
            <person name="Small I."/>
        </authorList>
    </citation>
    <scope>GENE FAMILY</scope>
</reference>
<evidence type="ECO:0000255" key="1"/>
<evidence type="ECO:0000255" key="2">
    <source>
        <dbReference type="PROSITE-ProRule" id="PRU00321"/>
    </source>
</evidence>
<evidence type="ECO:0000305" key="3"/>
<gene>
    <name type="ordered locus">At5g46580</name>
    <name type="ORF">F10E10.5</name>
</gene>
<keyword id="KW-0150">Chloroplast</keyword>
<keyword id="KW-0934">Plastid</keyword>
<keyword id="KW-1185">Reference proteome</keyword>
<keyword id="KW-0677">Repeat</keyword>
<keyword id="KW-0809">Transit peptide</keyword>
<protein>
    <recommendedName>
        <fullName>Pentatricopeptide repeat-containing protein At5g46580, chloroplastic</fullName>
    </recommendedName>
</protein>
<dbReference type="EMBL" id="AB028605">
    <property type="protein sequence ID" value="BAA97529.1"/>
    <property type="molecule type" value="Genomic_DNA"/>
</dbReference>
<dbReference type="EMBL" id="CP002688">
    <property type="protein sequence ID" value="AED95400.1"/>
    <property type="molecule type" value="Genomic_DNA"/>
</dbReference>
<dbReference type="RefSeq" id="NP_199470.1">
    <property type="nucleotide sequence ID" value="NM_124028.3"/>
</dbReference>
<dbReference type="SMR" id="Q9LS25"/>
<dbReference type="FunCoup" id="Q9LS25">
    <property type="interactions" value="1359"/>
</dbReference>
<dbReference type="STRING" id="3702.Q9LS25"/>
<dbReference type="iPTMnet" id="Q9LS25"/>
<dbReference type="PaxDb" id="3702-AT5G46580.1"/>
<dbReference type="ProteomicsDB" id="249301"/>
<dbReference type="EnsemblPlants" id="AT5G46580.1">
    <property type="protein sequence ID" value="AT5G46580.1"/>
    <property type="gene ID" value="AT5G46580"/>
</dbReference>
<dbReference type="GeneID" id="834701"/>
<dbReference type="Gramene" id="AT5G46580.1">
    <property type="protein sequence ID" value="AT5G46580.1"/>
    <property type="gene ID" value="AT5G46580"/>
</dbReference>
<dbReference type="KEGG" id="ath:AT5G46580"/>
<dbReference type="Araport" id="AT5G46580"/>
<dbReference type="TAIR" id="AT5G46580">
    <property type="gene designation" value="SOT1"/>
</dbReference>
<dbReference type="eggNOG" id="KOG4197">
    <property type="taxonomic scope" value="Eukaryota"/>
</dbReference>
<dbReference type="HOGENOM" id="CLU_018319_0_0_1"/>
<dbReference type="InParanoid" id="Q9LS25"/>
<dbReference type="OMA" id="KQSEHCR"/>
<dbReference type="OrthoDB" id="185373at2759"/>
<dbReference type="PhylomeDB" id="Q9LS25"/>
<dbReference type="PRO" id="PR:Q9LS25"/>
<dbReference type="Proteomes" id="UP000006548">
    <property type="component" value="Chromosome 5"/>
</dbReference>
<dbReference type="ExpressionAtlas" id="Q9LS25">
    <property type="expression patterns" value="baseline and differential"/>
</dbReference>
<dbReference type="GO" id="GO:0009507">
    <property type="term" value="C:chloroplast"/>
    <property type="evidence" value="ECO:0007005"/>
    <property type="project" value="TAIR"/>
</dbReference>
<dbReference type="GO" id="GO:0004530">
    <property type="term" value="F:deoxyribonuclease I activity"/>
    <property type="evidence" value="ECO:0000250"/>
    <property type="project" value="TAIR"/>
</dbReference>
<dbReference type="GO" id="GO:0033902">
    <property type="term" value="F:rRNA endonuclease activity"/>
    <property type="evidence" value="ECO:0000250"/>
    <property type="project" value="TAIR"/>
</dbReference>
<dbReference type="GO" id="GO:0042134">
    <property type="term" value="F:rRNA primary transcript binding"/>
    <property type="evidence" value="ECO:0000314"/>
    <property type="project" value="TAIR"/>
</dbReference>
<dbReference type="GO" id="GO:1901259">
    <property type="term" value="P:chloroplast rRNA processing"/>
    <property type="evidence" value="ECO:0000315"/>
    <property type="project" value="TAIR"/>
</dbReference>
<dbReference type="GO" id="GO:0042254">
    <property type="term" value="P:ribosome biogenesis"/>
    <property type="evidence" value="ECO:0000315"/>
    <property type="project" value="TAIR"/>
</dbReference>
<dbReference type="FunFam" id="1.25.40.10:FF:002334">
    <property type="entry name" value="Pentatricopeptide repeat-containing protein At5g46580, chloroplastic"/>
    <property type="match status" value="1"/>
</dbReference>
<dbReference type="Gene3D" id="1.25.40.10">
    <property type="entry name" value="Tetratricopeptide repeat domain"/>
    <property type="match status" value="3"/>
</dbReference>
<dbReference type="InterPro" id="IPR002885">
    <property type="entry name" value="Pentatricopeptide_rpt"/>
</dbReference>
<dbReference type="InterPro" id="IPR002625">
    <property type="entry name" value="Smr_dom"/>
</dbReference>
<dbReference type="InterPro" id="IPR011990">
    <property type="entry name" value="TPR-like_helical_dom_sf"/>
</dbReference>
<dbReference type="NCBIfam" id="TIGR00756">
    <property type="entry name" value="PPR"/>
    <property type="match status" value="7"/>
</dbReference>
<dbReference type="PANTHER" id="PTHR47447">
    <property type="entry name" value="OS03G0856100 PROTEIN"/>
    <property type="match status" value="1"/>
</dbReference>
<dbReference type="PANTHER" id="PTHR47447:SF3">
    <property type="entry name" value="OS03G0856100 PROTEIN"/>
    <property type="match status" value="1"/>
</dbReference>
<dbReference type="Pfam" id="PF13041">
    <property type="entry name" value="PPR_2"/>
    <property type="match status" value="2"/>
</dbReference>
<dbReference type="Pfam" id="PF13812">
    <property type="entry name" value="PPR_3"/>
    <property type="match status" value="2"/>
</dbReference>
<dbReference type="SUPFAM" id="SSF48452">
    <property type="entry name" value="TPR-like"/>
    <property type="match status" value="1"/>
</dbReference>
<dbReference type="PROSITE" id="PS51375">
    <property type="entry name" value="PPR"/>
    <property type="match status" value="10"/>
</dbReference>
<dbReference type="PROSITE" id="PS50828">
    <property type="entry name" value="SMR"/>
    <property type="match status" value="1"/>
</dbReference>
<accession>Q9LS25</accession>
<organism>
    <name type="scientific">Arabidopsis thaliana</name>
    <name type="common">Mouse-ear cress</name>
    <dbReference type="NCBI Taxonomy" id="3702"/>
    <lineage>
        <taxon>Eukaryota</taxon>
        <taxon>Viridiplantae</taxon>
        <taxon>Streptophyta</taxon>
        <taxon>Embryophyta</taxon>
        <taxon>Tracheophyta</taxon>
        <taxon>Spermatophyta</taxon>
        <taxon>Magnoliopsida</taxon>
        <taxon>eudicotyledons</taxon>
        <taxon>Gunneridae</taxon>
        <taxon>Pentapetalae</taxon>
        <taxon>rosids</taxon>
        <taxon>malvids</taxon>
        <taxon>Brassicales</taxon>
        <taxon>Brassicaceae</taxon>
        <taxon>Camelineae</taxon>
        <taxon>Arabidopsis</taxon>
    </lineage>
</organism>
<comment type="subcellular location">
    <subcellularLocation>
        <location evidence="3">Plastid</location>
        <location evidence="3">Chloroplast</location>
    </subcellularLocation>
</comment>
<comment type="similarity">
    <text evidence="3">Belongs to the PPR family. P subfamily.</text>
</comment>
<comment type="online information" name="Pentatricopeptide repeat proteins">
    <link uri="https://ppr.plantenergy.uwa.edu.au"/>
</comment>
<proteinExistence type="evidence at transcript level"/>
<feature type="transit peptide" description="Chloroplast" evidence="1">
    <location>
        <begin position="1"/>
        <end position="43"/>
    </location>
</feature>
<feature type="chain" id="PRO_0000363557" description="Pentatricopeptide repeat-containing protein At5g46580, chloroplastic">
    <location>
        <begin position="44"/>
        <end position="711"/>
    </location>
</feature>
<feature type="repeat" description="PPR 1">
    <location>
        <begin position="185"/>
        <end position="219"/>
    </location>
</feature>
<feature type="repeat" description="PPR 2">
    <location>
        <begin position="220"/>
        <end position="254"/>
    </location>
</feature>
<feature type="repeat" description="PPR 3">
    <location>
        <begin position="255"/>
        <end position="289"/>
    </location>
</feature>
<feature type="repeat" description="PPR 4">
    <location>
        <begin position="290"/>
        <end position="324"/>
    </location>
</feature>
<feature type="repeat" description="PPR 5">
    <location>
        <begin position="325"/>
        <end position="359"/>
    </location>
</feature>
<feature type="repeat" description="PPR 6">
    <location>
        <begin position="360"/>
        <end position="394"/>
    </location>
</feature>
<feature type="repeat" description="PPR 7">
    <location>
        <begin position="395"/>
        <end position="425"/>
    </location>
</feature>
<feature type="repeat" description="PPR 8">
    <location>
        <begin position="431"/>
        <end position="465"/>
    </location>
</feature>
<feature type="repeat" description="PPR 9">
    <location>
        <begin position="466"/>
        <end position="500"/>
    </location>
</feature>
<feature type="repeat" description="PPR 10">
    <location>
        <begin position="501"/>
        <end position="535"/>
    </location>
</feature>
<feature type="domain" description="Smr" evidence="2">
    <location>
        <begin position="614"/>
        <end position="696"/>
    </location>
</feature>
<sequence length="711" mass="80880">MATVLTTAIDVCFNPQNSDTKKHSLFLKPSLFRQSRSRKLNISCSSLKQPKTLEEEPITTKTPSLSEQLKPLSATTLRQEQTQILSKPKSVWVNPTRPKRSVLSLQRQKRSAYSYNPQIKDLRAFALKLNSSIFTEKSEFLSLLDEIPHPPNRDNALLVLNSLREWQKTHTFFNWVKSKSLFPMETIFYNVTMKSLRFGRQFQLIEEMALEMVKDGVELDNITYSTIITCAKRCNLYNKAIEWFERMYKTGLMPDEVTYSAILDVYSKSGKVEEVLSLYERAVATGWKPDAIAFSVLGKMFGEAGDYDGIRYVLQEMKSMDVKPNVVVYNTLLEAMGRAGKPGLARSLFNEMLEAGLTPNEKTLTALVKIYGKARWARDALQLWEEMKAKKWPMDFILYNTLLNMCADIGLEEEAERLFNDMKESVQCRPDNFSYTAMLNIYGSGGKAEKAMELFEEMLKAGVQVNVMGCTCLVQCLGKAKRIDDVVYVFDLSIKRGVKPDDRLCGCLLSVMALCESSEDAEKVMACLERANKKLVTFVNLIVDEKTEYETVKEEFKLVINATQVEARRPFCNCLIDICRGNNRHERAHELLYLGTLFGLYPGLHNKTIKEWSLDVRSLSVGAAETALEEWMRTLANIIKRQEELPELFLAQTGTGTHRFSQGLANSFALHLQQLSAPFRQSDRPGIFVATKEDLVSWLESKFPPLVTSQA</sequence>
<name>PP420_ARATH</name>